<comment type="function">
    <text evidence="1">May be a scaffold component in the postsynaptic density.</text>
</comment>
<comment type="subunit">
    <text evidence="1">Interacts probably directly with DLG1, DLG4, HOMER1. Interacts with DLGAP1, INA, CAMK2A, GRIN2B and GRIA1. Interacts with TNIK and MINK1 (By similarity).</text>
</comment>
<comment type="subcellular location">
    <subcellularLocation>
        <location evidence="1">Postsynaptic density</location>
    </subcellularLocation>
</comment>
<comment type="alternative products">
    <event type="alternative splicing"/>
    <isoform>
        <id>Q0VGY8-1</id>
        <name>1</name>
        <sequence type="displayed"/>
    </isoform>
    <isoform>
        <id>Q0VGY8-2</id>
        <name>2</name>
        <sequence type="described" ref="VSP_030829 VSP_030830 VSP_030831"/>
    </isoform>
</comment>
<comment type="PTM">
    <text evidence="1">Phosphorylated; by MINK1 and TNIK upon stimulation by RAP2A.</text>
</comment>
<comment type="similarity">
    <text evidence="6">Belongs to the TANC family.</text>
</comment>
<comment type="sequence caution" evidence="6">
    <conflict type="erroneous gene model prediction">
        <sequence resource="EMBL-CDS" id="CAM27490"/>
    </conflict>
</comment>
<comment type="sequence caution" evidence="6">
    <conflict type="erroneous gene model prediction">
        <sequence resource="EMBL-CDS" id="CAM27492"/>
    </conflict>
</comment>
<accession>Q0VGY8</accession>
<accession>A2AUL4</accession>
<accession>A2AUL6</accession>
<accession>Q80VD2</accession>
<accession>Q8C0Q6</accession>
<keyword id="KW-0007">Acetylation</keyword>
<keyword id="KW-0025">Alternative splicing</keyword>
<keyword id="KW-0040">ANK repeat</keyword>
<keyword id="KW-0597">Phosphoprotein</keyword>
<keyword id="KW-1185">Reference proteome</keyword>
<keyword id="KW-0677">Repeat</keyword>
<keyword id="KW-0770">Synapse</keyword>
<keyword id="KW-0802">TPR repeat</keyword>
<reference key="1">
    <citation type="journal article" date="2005" name="Science">
        <title>The transcriptional landscape of the mammalian genome.</title>
        <authorList>
            <person name="Carninci P."/>
            <person name="Kasukawa T."/>
            <person name="Katayama S."/>
            <person name="Gough J."/>
            <person name="Frith M.C."/>
            <person name="Maeda N."/>
            <person name="Oyama R."/>
            <person name="Ravasi T."/>
            <person name="Lenhard B."/>
            <person name="Wells C."/>
            <person name="Kodzius R."/>
            <person name="Shimokawa K."/>
            <person name="Bajic V.B."/>
            <person name="Brenner S.E."/>
            <person name="Batalov S."/>
            <person name="Forrest A.R."/>
            <person name="Zavolan M."/>
            <person name="Davis M.J."/>
            <person name="Wilming L.G."/>
            <person name="Aidinis V."/>
            <person name="Allen J.E."/>
            <person name="Ambesi-Impiombato A."/>
            <person name="Apweiler R."/>
            <person name="Aturaliya R.N."/>
            <person name="Bailey T.L."/>
            <person name="Bansal M."/>
            <person name="Baxter L."/>
            <person name="Beisel K.W."/>
            <person name="Bersano T."/>
            <person name="Bono H."/>
            <person name="Chalk A.M."/>
            <person name="Chiu K.P."/>
            <person name="Choudhary V."/>
            <person name="Christoffels A."/>
            <person name="Clutterbuck D.R."/>
            <person name="Crowe M.L."/>
            <person name="Dalla E."/>
            <person name="Dalrymple B.P."/>
            <person name="de Bono B."/>
            <person name="Della Gatta G."/>
            <person name="di Bernardo D."/>
            <person name="Down T."/>
            <person name="Engstrom P."/>
            <person name="Fagiolini M."/>
            <person name="Faulkner G."/>
            <person name="Fletcher C.F."/>
            <person name="Fukushima T."/>
            <person name="Furuno M."/>
            <person name="Futaki S."/>
            <person name="Gariboldi M."/>
            <person name="Georgii-Hemming P."/>
            <person name="Gingeras T.R."/>
            <person name="Gojobori T."/>
            <person name="Green R.E."/>
            <person name="Gustincich S."/>
            <person name="Harbers M."/>
            <person name="Hayashi Y."/>
            <person name="Hensch T.K."/>
            <person name="Hirokawa N."/>
            <person name="Hill D."/>
            <person name="Huminiecki L."/>
            <person name="Iacono M."/>
            <person name="Ikeo K."/>
            <person name="Iwama A."/>
            <person name="Ishikawa T."/>
            <person name="Jakt M."/>
            <person name="Kanapin A."/>
            <person name="Katoh M."/>
            <person name="Kawasawa Y."/>
            <person name="Kelso J."/>
            <person name="Kitamura H."/>
            <person name="Kitano H."/>
            <person name="Kollias G."/>
            <person name="Krishnan S.P."/>
            <person name="Kruger A."/>
            <person name="Kummerfeld S.K."/>
            <person name="Kurochkin I.V."/>
            <person name="Lareau L.F."/>
            <person name="Lazarevic D."/>
            <person name="Lipovich L."/>
            <person name="Liu J."/>
            <person name="Liuni S."/>
            <person name="McWilliam S."/>
            <person name="Madan Babu M."/>
            <person name="Madera M."/>
            <person name="Marchionni L."/>
            <person name="Matsuda H."/>
            <person name="Matsuzawa S."/>
            <person name="Miki H."/>
            <person name="Mignone F."/>
            <person name="Miyake S."/>
            <person name="Morris K."/>
            <person name="Mottagui-Tabar S."/>
            <person name="Mulder N."/>
            <person name="Nakano N."/>
            <person name="Nakauchi H."/>
            <person name="Ng P."/>
            <person name="Nilsson R."/>
            <person name="Nishiguchi S."/>
            <person name="Nishikawa S."/>
            <person name="Nori F."/>
            <person name="Ohara O."/>
            <person name="Okazaki Y."/>
            <person name="Orlando V."/>
            <person name="Pang K.C."/>
            <person name="Pavan W.J."/>
            <person name="Pavesi G."/>
            <person name="Pesole G."/>
            <person name="Petrovsky N."/>
            <person name="Piazza S."/>
            <person name="Reed J."/>
            <person name="Reid J.F."/>
            <person name="Ring B.Z."/>
            <person name="Ringwald M."/>
            <person name="Rost B."/>
            <person name="Ruan Y."/>
            <person name="Salzberg S.L."/>
            <person name="Sandelin A."/>
            <person name="Schneider C."/>
            <person name="Schoenbach C."/>
            <person name="Sekiguchi K."/>
            <person name="Semple C.A."/>
            <person name="Seno S."/>
            <person name="Sessa L."/>
            <person name="Sheng Y."/>
            <person name="Shibata Y."/>
            <person name="Shimada H."/>
            <person name="Shimada K."/>
            <person name="Silva D."/>
            <person name="Sinclair B."/>
            <person name="Sperling S."/>
            <person name="Stupka E."/>
            <person name="Sugiura K."/>
            <person name="Sultana R."/>
            <person name="Takenaka Y."/>
            <person name="Taki K."/>
            <person name="Tammoja K."/>
            <person name="Tan S.L."/>
            <person name="Tang S."/>
            <person name="Taylor M.S."/>
            <person name="Tegner J."/>
            <person name="Teichmann S.A."/>
            <person name="Ueda H.R."/>
            <person name="van Nimwegen E."/>
            <person name="Verardo R."/>
            <person name="Wei C.L."/>
            <person name="Yagi K."/>
            <person name="Yamanishi H."/>
            <person name="Zabarovsky E."/>
            <person name="Zhu S."/>
            <person name="Zimmer A."/>
            <person name="Hide W."/>
            <person name="Bult C."/>
            <person name="Grimmond S.M."/>
            <person name="Teasdale R.D."/>
            <person name="Liu E.T."/>
            <person name="Brusic V."/>
            <person name="Quackenbush J."/>
            <person name="Wahlestedt C."/>
            <person name="Mattick J.S."/>
            <person name="Hume D.A."/>
            <person name="Kai C."/>
            <person name="Sasaki D."/>
            <person name="Tomaru Y."/>
            <person name="Fukuda S."/>
            <person name="Kanamori-Katayama M."/>
            <person name="Suzuki M."/>
            <person name="Aoki J."/>
            <person name="Arakawa T."/>
            <person name="Iida J."/>
            <person name="Imamura K."/>
            <person name="Itoh M."/>
            <person name="Kato T."/>
            <person name="Kawaji H."/>
            <person name="Kawagashira N."/>
            <person name="Kawashima T."/>
            <person name="Kojima M."/>
            <person name="Kondo S."/>
            <person name="Konno H."/>
            <person name="Nakano K."/>
            <person name="Ninomiya N."/>
            <person name="Nishio T."/>
            <person name="Okada M."/>
            <person name="Plessy C."/>
            <person name="Shibata K."/>
            <person name="Shiraki T."/>
            <person name="Suzuki S."/>
            <person name="Tagami M."/>
            <person name="Waki K."/>
            <person name="Watahiki A."/>
            <person name="Okamura-Oho Y."/>
            <person name="Suzuki H."/>
            <person name="Kawai J."/>
            <person name="Hayashizaki Y."/>
        </authorList>
    </citation>
    <scope>NUCLEOTIDE SEQUENCE [LARGE SCALE MRNA] (ISOFORM 2)</scope>
    <source>
        <strain>C57BL/6J</strain>
        <tissue>Testis</tissue>
    </source>
</reference>
<reference key="2">
    <citation type="journal article" date="2009" name="PLoS Biol.">
        <title>Lineage-specific biology revealed by a finished genome assembly of the mouse.</title>
        <authorList>
            <person name="Church D.M."/>
            <person name="Goodstadt L."/>
            <person name="Hillier L.W."/>
            <person name="Zody M.C."/>
            <person name="Goldstein S."/>
            <person name="She X."/>
            <person name="Bult C.J."/>
            <person name="Agarwala R."/>
            <person name="Cherry J.L."/>
            <person name="DiCuccio M."/>
            <person name="Hlavina W."/>
            <person name="Kapustin Y."/>
            <person name="Meric P."/>
            <person name="Maglott D."/>
            <person name="Birtle Z."/>
            <person name="Marques A.C."/>
            <person name="Graves T."/>
            <person name="Zhou S."/>
            <person name="Teague B."/>
            <person name="Potamousis K."/>
            <person name="Churas C."/>
            <person name="Place M."/>
            <person name="Herschleb J."/>
            <person name="Runnheim R."/>
            <person name="Forrest D."/>
            <person name="Amos-Landgraf J."/>
            <person name="Schwartz D.C."/>
            <person name="Cheng Z."/>
            <person name="Lindblad-Toh K."/>
            <person name="Eichler E.E."/>
            <person name="Ponting C.P."/>
        </authorList>
    </citation>
    <scope>NUCLEOTIDE SEQUENCE [LARGE SCALE GENOMIC DNA]</scope>
    <source>
        <strain>C57BL/6J</strain>
    </source>
</reference>
<reference key="3">
    <citation type="journal article" date="2004" name="Genome Res.">
        <title>The status, quality, and expansion of the NIH full-length cDNA project: the Mammalian Gene Collection (MGC).</title>
        <authorList>
            <consortium name="The MGC Project Team"/>
        </authorList>
    </citation>
    <scope>NUCLEOTIDE SEQUENCE [LARGE SCALE MRNA] (ISOFORM 1)</scope>
    <source>
        <strain>C57BL/6J</strain>
        <strain>FVB/N</strain>
        <tissue>Head</tissue>
        <tissue>Mammary tumor</tissue>
    </source>
</reference>
<reference key="4">
    <citation type="journal article" date="2010" name="Cell">
        <title>A tissue-specific atlas of mouse protein phosphorylation and expression.</title>
        <authorList>
            <person name="Huttlin E.L."/>
            <person name="Jedrychowski M.P."/>
            <person name="Elias J.E."/>
            <person name="Goswami T."/>
            <person name="Rad R."/>
            <person name="Beausoleil S.A."/>
            <person name="Villen J."/>
            <person name="Haas W."/>
            <person name="Sowa M.E."/>
            <person name="Gygi S.P."/>
        </authorList>
    </citation>
    <scope>PHOSPHORYLATION [LARGE SCALE ANALYSIS] AT SER-60; SER-1665; SER-1673 AND SER-1674</scope>
    <scope>IDENTIFICATION BY MASS SPECTROMETRY [LARGE SCALE ANALYSIS]</scope>
    <source>
        <tissue>Brain</tissue>
        <tissue>Brown adipose tissue</tissue>
        <tissue>Heart</tissue>
        <tissue>Kidney</tissue>
        <tissue>Lung</tissue>
        <tissue>Pancreas</tissue>
        <tissue>Spleen</tissue>
    </source>
</reference>
<protein>
    <recommendedName>
        <fullName>Protein TANC1</fullName>
    </recommendedName>
    <alternativeName>
        <fullName>Tetratricopeptide repeat, ankyrin repeat and coiled-coil domain-containing protein 1</fullName>
    </alternativeName>
</protein>
<dbReference type="EMBL" id="AK030022">
    <property type="protein sequence ID" value="BAC26741.1"/>
    <property type="molecule type" value="mRNA"/>
</dbReference>
<dbReference type="EMBL" id="AL929160">
    <property type="protein sequence ID" value="CAM27490.1"/>
    <property type="status" value="ALT_SEQ"/>
    <property type="molecule type" value="Genomic_DNA"/>
</dbReference>
<dbReference type="EMBL" id="AL929160">
    <property type="protein sequence ID" value="CAM27492.1"/>
    <property type="status" value="ALT_SEQ"/>
    <property type="molecule type" value="Genomic_DNA"/>
</dbReference>
<dbReference type="EMBL" id="BC079914">
    <property type="protein sequence ID" value="AAH79914.1"/>
    <property type="molecule type" value="mRNA"/>
</dbReference>
<dbReference type="EMBL" id="BC047437">
    <property type="protein sequence ID" value="AAH47437.1"/>
    <property type="molecule type" value="mRNA"/>
</dbReference>
<dbReference type="CCDS" id="CCDS16054.1">
    <molecule id="Q0VGY8-1"/>
</dbReference>
<dbReference type="RefSeq" id="NP_001277588.1">
    <property type="nucleotide sequence ID" value="NM_001290659.1"/>
</dbReference>
<dbReference type="RefSeq" id="NP_938036.2">
    <molecule id="Q0VGY8-1"/>
    <property type="nucleotide sequence ID" value="NM_198294.3"/>
</dbReference>
<dbReference type="RefSeq" id="XP_036018382.1">
    <molecule id="Q0VGY8-1"/>
    <property type="nucleotide sequence ID" value="XM_036162489.1"/>
</dbReference>
<dbReference type="RefSeq" id="XP_036018383.1">
    <molecule id="Q0VGY8-1"/>
    <property type="nucleotide sequence ID" value="XM_036162490.1"/>
</dbReference>
<dbReference type="SMR" id="Q0VGY8"/>
<dbReference type="BioGRID" id="211768">
    <property type="interactions" value="7"/>
</dbReference>
<dbReference type="FunCoup" id="Q0VGY8">
    <property type="interactions" value="371"/>
</dbReference>
<dbReference type="STRING" id="10090.ENSMUSP00000036003"/>
<dbReference type="GlyGen" id="Q0VGY8">
    <property type="glycosylation" value="7 sites, 1 O-linked glycan (6 sites)"/>
</dbReference>
<dbReference type="iPTMnet" id="Q0VGY8"/>
<dbReference type="PhosphoSitePlus" id="Q0VGY8"/>
<dbReference type="jPOST" id="Q0VGY8"/>
<dbReference type="PaxDb" id="10090-ENSMUSP00000036003"/>
<dbReference type="PeptideAtlas" id="Q0VGY8"/>
<dbReference type="ProteomicsDB" id="263002">
    <molecule id="Q0VGY8-1"/>
</dbReference>
<dbReference type="ProteomicsDB" id="263003">
    <molecule id="Q0VGY8-2"/>
</dbReference>
<dbReference type="Pumba" id="Q0VGY8"/>
<dbReference type="Antibodypedia" id="47958">
    <property type="antibodies" value="39 antibodies from 9 providers"/>
</dbReference>
<dbReference type="DNASU" id="66860"/>
<dbReference type="Ensembl" id="ENSMUST00000037526.11">
    <molecule id="Q0VGY8-1"/>
    <property type="protein sequence ID" value="ENSMUSP00000036003.5"/>
    <property type="gene ID" value="ENSMUSG00000035168.17"/>
</dbReference>
<dbReference type="Ensembl" id="ENSMUST00000139863.3">
    <molecule id="Q0VGY8-1"/>
    <property type="protein sequence ID" value="ENSMUSP00000123345.3"/>
    <property type="gene ID" value="ENSMUSG00000035168.17"/>
</dbReference>
<dbReference type="GeneID" id="66860"/>
<dbReference type="KEGG" id="mmu:66860"/>
<dbReference type="UCSC" id="uc008jtj.2">
    <molecule id="Q0VGY8-1"/>
    <property type="organism name" value="mouse"/>
</dbReference>
<dbReference type="UCSC" id="uc008jtk.1">
    <molecule id="Q0VGY8-2"/>
    <property type="organism name" value="mouse"/>
</dbReference>
<dbReference type="AGR" id="MGI:1914110"/>
<dbReference type="CTD" id="85461"/>
<dbReference type="MGI" id="MGI:1914110">
    <property type="gene designation" value="Tanc1"/>
</dbReference>
<dbReference type="VEuPathDB" id="HostDB:ENSMUSG00000035168"/>
<dbReference type="eggNOG" id="KOG0504">
    <property type="taxonomic scope" value="Eukaryota"/>
</dbReference>
<dbReference type="GeneTree" id="ENSGT00940000155655"/>
<dbReference type="InParanoid" id="Q0VGY8"/>
<dbReference type="OMA" id="QGPDARM"/>
<dbReference type="OrthoDB" id="5958958at2759"/>
<dbReference type="PhylomeDB" id="Q0VGY8"/>
<dbReference type="TreeFam" id="TF323159"/>
<dbReference type="BioGRID-ORCS" id="66860">
    <property type="hits" value="1 hit in 78 CRISPR screens"/>
</dbReference>
<dbReference type="ChiTaRS" id="Tanc1">
    <property type="organism name" value="mouse"/>
</dbReference>
<dbReference type="PRO" id="PR:Q0VGY8"/>
<dbReference type="Proteomes" id="UP000000589">
    <property type="component" value="Chromosome 2"/>
</dbReference>
<dbReference type="RNAct" id="Q0VGY8">
    <property type="molecule type" value="protein"/>
</dbReference>
<dbReference type="Bgee" id="ENSMUSG00000035168">
    <property type="expression patterns" value="Expressed in skin of external ear and 233 other cell types or tissues"/>
</dbReference>
<dbReference type="ExpressionAtlas" id="Q0VGY8">
    <property type="expression patterns" value="baseline and differential"/>
</dbReference>
<dbReference type="GO" id="GO:0043679">
    <property type="term" value="C:axon terminus"/>
    <property type="evidence" value="ECO:0000314"/>
    <property type="project" value="MGI"/>
</dbReference>
<dbReference type="GO" id="GO:0030425">
    <property type="term" value="C:dendrite"/>
    <property type="evidence" value="ECO:0000314"/>
    <property type="project" value="MGI"/>
</dbReference>
<dbReference type="GO" id="GO:0043025">
    <property type="term" value="C:neuronal cell body"/>
    <property type="evidence" value="ECO:0000314"/>
    <property type="project" value="MGI"/>
</dbReference>
<dbReference type="GO" id="GO:0014069">
    <property type="term" value="C:postsynaptic density"/>
    <property type="evidence" value="ECO:0007669"/>
    <property type="project" value="UniProtKB-SubCell"/>
</dbReference>
<dbReference type="GO" id="GO:0097062">
    <property type="term" value="P:dendritic spine maintenance"/>
    <property type="evidence" value="ECO:0000315"/>
    <property type="project" value="MGI"/>
</dbReference>
<dbReference type="GO" id="GO:0007520">
    <property type="term" value="P:myoblast fusion"/>
    <property type="evidence" value="ECO:0000315"/>
    <property type="project" value="MGI"/>
</dbReference>
<dbReference type="GO" id="GO:0008542">
    <property type="term" value="P:visual learning"/>
    <property type="evidence" value="ECO:0000315"/>
    <property type="project" value="MGI"/>
</dbReference>
<dbReference type="FunFam" id="1.25.40.20:FF:000229">
    <property type="entry name" value="protein TANC1 isoform X3"/>
    <property type="match status" value="1"/>
</dbReference>
<dbReference type="FunFam" id="1.25.40.20:FF:000036">
    <property type="entry name" value="protein TANC2 isoform X2"/>
    <property type="match status" value="1"/>
</dbReference>
<dbReference type="FunFam" id="1.25.40.10:FF:000044">
    <property type="entry name" value="Tetratricopeptide repeat, ankyrin repeat and coiled-coil containing 1"/>
    <property type="match status" value="1"/>
</dbReference>
<dbReference type="Gene3D" id="1.25.40.20">
    <property type="entry name" value="Ankyrin repeat-containing domain"/>
    <property type="match status" value="3"/>
</dbReference>
<dbReference type="Gene3D" id="1.25.40.10">
    <property type="entry name" value="Tetratricopeptide repeat domain"/>
    <property type="match status" value="1"/>
</dbReference>
<dbReference type="InterPro" id="IPR002110">
    <property type="entry name" value="Ankyrin_rpt"/>
</dbReference>
<dbReference type="InterPro" id="IPR036770">
    <property type="entry name" value="Ankyrin_rpt-contain_sf"/>
</dbReference>
<dbReference type="InterPro" id="IPR050889">
    <property type="entry name" value="Dendritic_Spine_Reg/Scaffold"/>
</dbReference>
<dbReference type="InterPro" id="IPR011990">
    <property type="entry name" value="TPR-like_helical_dom_sf"/>
</dbReference>
<dbReference type="InterPro" id="IPR019734">
    <property type="entry name" value="TPR_rpt"/>
</dbReference>
<dbReference type="PANTHER" id="PTHR24166:SF23">
    <property type="entry name" value="PROTEIN TANC1"/>
    <property type="match status" value="1"/>
</dbReference>
<dbReference type="PANTHER" id="PTHR24166">
    <property type="entry name" value="ROLLING PEBBLES, ISOFORM B"/>
    <property type="match status" value="1"/>
</dbReference>
<dbReference type="Pfam" id="PF00023">
    <property type="entry name" value="Ank"/>
    <property type="match status" value="1"/>
</dbReference>
<dbReference type="Pfam" id="PF12796">
    <property type="entry name" value="Ank_2"/>
    <property type="match status" value="3"/>
</dbReference>
<dbReference type="SMART" id="SM00248">
    <property type="entry name" value="ANK"/>
    <property type="match status" value="10"/>
</dbReference>
<dbReference type="SMART" id="SM00028">
    <property type="entry name" value="TPR"/>
    <property type="match status" value="3"/>
</dbReference>
<dbReference type="SUPFAM" id="SSF48403">
    <property type="entry name" value="Ankyrin repeat"/>
    <property type="match status" value="1"/>
</dbReference>
<dbReference type="SUPFAM" id="SSF48452">
    <property type="entry name" value="TPR-like"/>
    <property type="match status" value="1"/>
</dbReference>
<dbReference type="PROSITE" id="PS50297">
    <property type="entry name" value="ANK_REP_REGION"/>
    <property type="match status" value="1"/>
</dbReference>
<dbReference type="PROSITE" id="PS50088">
    <property type="entry name" value="ANK_REPEAT"/>
    <property type="match status" value="6"/>
</dbReference>
<dbReference type="PROSITE" id="PS50005">
    <property type="entry name" value="TPR"/>
    <property type="match status" value="3"/>
</dbReference>
<dbReference type="PROSITE" id="PS50293">
    <property type="entry name" value="TPR_REGION"/>
    <property type="match status" value="1"/>
</dbReference>
<evidence type="ECO:0000250" key="1"/>
<evidence type="ECO:0000250" key="2">
    <source>
        <dbReference type="UniProtKB" id="Q6F6B3"/>
    </source>
</evidence>
<evidence type="ECO:0000250" key="3">
    <source>
        <dbReference type="UniProtKB" id="Q9C0D5"/>
    </source>
</evidence>
<evidence type="ECO:0000256" key="4">
    <source>
        <dbReference type="SAM" id="MobiDB-lite"/>
    </source>
</evidence>
<evidence type="ECO:0000303" key="5">
    <source>
    </source>
</evidence>
<evidence type="ECO:0000305" key="6"/>
<evidence type="ECO:0007744" key="7">
    <source>
    </source>
</evidence>
<feature type="chain" id="PRO_0000316960" description="Protein TANC1">
    <location>
        <begin position="1"/>
        <end position="1856"/>
    </location>
</feature>
<feature type="repeat" description="ANK 1">
    <location>
        <begin position="893"/>
        <end position="925"/>
    </location>
</feature>
<feature type="repeat" description="ANK 2">
    <location>
        <begin position="931"/>
        <end position="960"/>
    </location>
</feature>
<feature type="repeat" description="ANK 3">
    <location>
        <begin position="964"/>
        <end position="993"/>
    </location>
</feature>
<feature type="repeat" description="ANK 4">
    <location>
        <begin position="997"/>
        <end position="1026"/>
    </location>
</feature>
<feature type="repeat" description="ANK 5">
    <location>
        <begin position="1037"/>
        <end position="1066"/>
    </location>
</feature>
<feature type="repeat" description="ANK 6">
    <location>
        <begin position="1075"/>
        <end position="1104"/>
    </location>
</feature>
<feature type="repeat" description="ANK 7">
    <location>
        <begin position="1108"/>
        <end position="1137"/>
    </location>
</feature>
<feature type="repeat" description="ANK 8">
    <location>
        <begin position="1141"/>
        <end position="1170"/>
    </location>
</feature>
<feature type="repeat" description="ANK 9">
    <location>
        <begin position="1174"/>
        <end position="1203"/>
    </location>
</feature>
<feature type="repeat" description="ANK 10">
    <location>
        <begin position="1207"/>
        <end position="1236"/>
    </location>
</feature>
<feature type="repeat" description="ANK 11">
    <location>
        <begin position="1240"/>
        <end position="1269"/>
    </location>
</feature>
<feature type="repeat" description="TPR 1">
    <location>
        <begin position="1286"/>
        <end position="1319"/>
    </location>
</feature>
<feature type="repeat" description="TPR 2">
    <location>
        <begin position="1333"/>
        <end position="1366"/>
    </location>
</feature>
<feature type="repeat" description="TPR 3">
    <location>
        <begin position="1368"/>
        <end position="1400"/>
    </location>
</feature>
<feature type="region of interest" description="Disordered" evidence="4">
    <location>
        <begin position="1"/>
        <end position="45"/>
    </location>
</feature>
<feature type="region of interest" description="Disordered" evidence="4">
    <location>
        <begin position="58"/>
        <end position="130"/>
    </location>
</feature>
<feature type="region of interest" description="Disordered" evidence="4">
    <location>
        <begin position="203"/>
        <end position="222"/>
    </location>
</feature>
<feature type="region of interest" description="Disordered" evidence="4">
    <location>
        <begin position="262"/>
        <end position="296"/>
    </location>
</feature>
<feature type="region of interest" description="Disordered" evidence="4">
    <location>
        <begin position="437"/>
        <end position="489"/>
    </location>
</feature>
<feature type="region of interest" description="Disordered" evidence="4">
    <location>
        <begin position="1417"/>
        <end position="1597"/>
    </location>
</feature>
<feature type="region of interest" description="Disordered" evidence="4">
    <location>
        <begin position="1636"/>
        <end position="1720"/>
    </location>
</feature>
<feature type="region of interest" description="Disordered" evidence="4">
    <location>
        <begin position="1832"/>
        <end position="1856"/>
    </location>
</feature>
<feature type="compositionally biased region" description="Basic and acidic residues" evidence="4">
    <location>
        <begin position="8"/>
        <end position="21"/>
    </location>
</feature>
<feature type="compositionally biased region" description="Polar residues" evidence="4">
    <location>
        <begin position="29"/>
        <end position="45"/>
    </location>
</feature>
<feature type="compositionally biased region" description="Low complexity" evidence="4">
    <location>
        <begin position="60"/>
        <end position="77"/>
    </location>
</feature>
<feature type="compositionally biased region" description="Polar residues" evidence="4">
    <location>
        <begin position="203"/>
        <end position="216"/>
    </location>
</feature>
<feature type="compositionally biased region" description="Low complexity" evidence="4">
    <location>
        <begin position="439"/>
        <end position="475"/>
    </location>
</feature>
<feature type="compositionally biased region" description="Low complexity" evidence="4">
    <location>
        <begin position="1417"/>
        <end position="1426"/>
    </location>
</feature>
<feature type="compositionally biased region" description="Acidic residues" evidence="4">
    <location>
        <begin position="1454"/>
        <end position="1463"/>
    </location>
</feature>
<feature type="compositionally biased region" description="Polar residues" evidence="4">
    <location>
        <begin position="1490"/>
        <end position="1505"/>
    </location>
</feature>
<feature type="compositionally biased region" description="Polar residues" evidence="4">
    <location>
        <begin position="1524"/>
        <end position="1556"/>
    </location>
</feature>
<feature type="compositionally biased region" description="Low complexity" evidence="4">
    <location>
        <begin position="1656"/>
        <end position="1686"/>
    </location>
</feature>
<feature type="modified residue" description="N-acetylmethionine" evidence="3">
    <location>
        <position position="1"/>
    </location>
</feature>
<feature type="modified residue" description="Phosphoserine" evidence="7">
    <location>
        <position position="60"/>
    </location>
</feature>
<feature type="modified residue" description="Phosphoserine" evidence="3">
    <location>
        <position position="63"/>
    </location>
</feature>
<feature type="modified residue" description="Phosphoserine" evidence="3">
    <location>
        <position position="64"/>
    </location>
</feature>
<feature type="modified residue" description="Phosphoserine" evidence="3">
    <location>
        <position position="204"/>
    </location>
</feature>
<feature type="modified residue" description="Phosphoserine" evidence="3">
    <location>
        <position position="267"/>
    </location>
</feature>
<feature type="modified residue" description="Phosphoserine" evidence="3">
    <location>
        <position position="462"/>
    </location>
</feature>
<feature type="modified residue" description="Phosphoserine" evidence="2">
    <location>
        <position position="1436"/>
    </location>
</feature>
<feature type="modified residue" description="Phosphoserine" evidence="2">
    <location>
        <position position="1463"/>
    </location>
</feature>
<feature type="modified residue" description="Phosphoserine" evidence="7">
    <location>
        <position position="1665"/>
    </location>
</feature>
<feature type="modified residue" description="Phosphoserine" evidence="7">
    <location>
        <position position="1673"/>
    </location>
</feature>
<feature type="modified residue" description="Phosphoserine" evidence="7">
    <location>
        <position position="1674"/>
    </location>
</feature>
<feature type="splice variant" id="VSP_030829" description="In isoform 2." evidence="5">
    <location>
        <begin position="1"/>
        <end position="102"/>
    </location>
</feature>
<feature type="splice variant" id="VSP_030830" description="In isoform 2." evidence="5">
    <original>ALTAAAGRGKVEIC</original>
    <variation>GNYASSVCSQQPRA</variation>
    <location>
        <begin position="1079"/>
        <end position="1092"/>
    </location>
</feature>
<feature type="splice variant" id="VSP_030831" description="In isoform 2." evidence="5">
    <location>
        <begin position="1093"/>
        <end position="1856"/>
    </location>
</feature>
<feature type="sequence conflict" description="In Ref. 1; BAC26741." evidence="6" ref="1">
    <original>L</original>
    <variation>M</variation>
    <location>
        <position position="166"/>
    </location>
</feature>
<feature type="sequence conflict" description="In Ref. 1; BAC26741." evidence="6" ref="1">
    <original>I</original>
    <variation>N</variation>
    <location>
        <position position="209"/>
    </location>
</feature>
<feature type="sequence conflict" description="In Ref. 3; AAH79914." evidence="6" ref="3">
    <original>V</original>
    <variation>L</variation>
    <location>
        <position position="1102"/>
    </location>
</feature>
<organism>
    <name type="scientific">Mus musculus</name>
    <name type="common">Mouse</name>
    <dbReference type="NCBI Taxonomy" id="10090"/>
    <lineage>
        <taxon>Eukaryota</taxon>
        <taxon>Metazoa</taxon>
        <taxon>Chordata</taxon>
        <taxon>Craniata</taxon>
        <taxon>Vertebrata</taxon>
        <taxon>Euteleostomi</taxon>
        <taxon>Mammalia</taxon>
        <taxon>Eutheria</taxon>
        <taxon>Euarchontoglires</taxon>
        <taxon>Glires</taxon>
        <taxon>Rodentia</taxon>
        <taxon>Myomorpha</taxon>
        <taxon>Muroidea</taxon>
        <taxon>Muridae</taxon>
        <taxon>Murinae</taxon>
        <taxon>Mus</taxon>
        <taxon>Mus</taxon>
    </lineage>
</organism>
<proteinExistence type="evidence at protein level"/>
<sequence length="1856" mass="200805">MLKAVLKKSREGGKGSKKEAGGDFGSETPALSSSGDSPVNSLSTTEDTYRVSLAKGVSMSLPSSPLLPRQSLLTQSRSNKKSPGPVRKPKYVESPRVPGDPVMIPFGEGSKPSEPSATEAKADNEPSCSPAAQELLTRLGFLLGEGIPSATHITIEDKNEAMCTALSQGISPCSTLTSSTASPSTDSPCSTLNSCVSKTAASKSPCETISSPSSTLESKDSGIIATITSSSENDDRSGSSLEWNRDGSLRLGVQKGVLHDRRADNCSPVAEEETTGSAESVLPKAEPSAGDGPVPYPQSSGSLIMPRPNSVAATSSTKLEDLSYLDGQRNAPLRTSIRLPWHNTAGGRAPEVKARFAPYKPQEILLKPLLFEVPSITTDSVFVGRDWLFHQIEENLRNTELAENRGAVVVGSVGFGKTAIISKLVALSCHGSRMRQIASSSPSLSPKSSDPTQDLPGTPLLSPSSSTSALSVTRTPAGPGTADSQRPREDAVKYLASKVVAYHYCQADNTYTCLVPEFVHSIAALLCRSHQLAAYRDLLIKEPQLQSMLSLRSCVQDPVAAFKRGVLEPLTSLRNEQKIPEEEYIILIDGLNEAEFHKPDYGDTLSSFITKIIPKFPTWLKLIVTVRANFQEIISALPFVKLSLDDFPDNKDIHSDLHAYVQHRVHSSQDILSNISLNGKADAALISKVSSHLVLRSLGSYLYLKLTLDLFQRGHLVIKSASYKVVPVSLSELYLLQCNMKFMTQSAFDRALPILNVALASLHPMTDEQIFQAINAGHIQGEQGWEDFQQRMEALSCFLIKRRDKTRMFCHPSFREWLVWRADGESTAFLCEPRNGHALLAFMFSRQESKLNRQQTMELGHHILKAHIFKGLSKKTGVSSSHLQALWIGYSTEGLSAALASLRNLYTPNVKVSRLLILGGANVNYRTEVLNNAPILCVQSHLGHEEVVTLLLEFGACLDGMSENGMNALCYAAAAGHMKLVCLLIKKGARVDHLDKKGQCALVHSALRGHSDILQYLLNCEWSAGPPQPGTLRKSQALQQALTAAASMGHSSVVQSLLGMAEEHEIEVNGTDTLWGETALTAAAGRGKVEICELLLERGAAVSRANRRGVPPLFCAARQGHWQVVRLLLDRGCDVNLSDKQGRTPLMVASCEGHLSTVEFLLSKGAALSSLDKEGLSALSWACLKGHRAVVQYLVEEGAEIDQTDKNGRTPLDLAAFYGDAETVLYLVEKGAVIEHVDHSGMRPLDRAIGCRNTAVVVTLLRKGAKLGNAAWAMATSKPDILIILLQKLVEEGNVMYKKGKMKEAAQRYQYALRKFPREGLGEDMRPFNELRVSLYLNLSRCRRKTNDFGLAEEFASKALELKPKSYEAFYARARAKRNSRQFLAALADLQEAVKLCPNNQEIKRLLARVEEECKQLQRNQQQKQQGPPPAPANDSDNEEDAPASSLKDHFPIEEAEEEDTSSQEESISPTPRSQPPPSVPSPYIRNLQEGLQSKGRSASPQSRAGISKSLRETVAQSGLVMQPTKQAQIVKTNQHLGSGQSSMRNSSTKIQVSSQNPPPSPMPGRVSAAPAVSRNQHLEGTGPFTAGTGCGHFGDRLGASQSLQLQRSESGTAYPLPSKVKAAERLLAHASVAVDMAPPNQGGPVSCSDVRHPASLSSSGSSGSPSSSIKMSSSTSSLTSSSSVSDGFKVQGPDSRIRDKGTTQVQGGTAEHRPRNTPFMGIMDKTARFQQQSNPPNRSWHCPVAEGLLTNTATAAGLQSNSEKPTLKPGGYCSQAKPCSVPPLSMGVHNGAQVKELEENKCQIPALCQDNRITKGVPHLYPEGVSKQPLHVSTEAHRSHLTSAKPKRSFIESNV</sequence>
<name>TANC1_MOUSE</name>
<gene>
    <name type="primary">Tanc1</name>
</gene>